<proteinExistence type="evidence at protein level"/>
<organism>
    <name type="scientific">Sphex argentatus argentatus</name>
    <name type="common">Black digger wasp</name>
    <dbReference type="NCBI Taxonomy" id="2838366"/>
    <lineage>
        <taxon>Eukaryota</taxon>
        <taxon>Metazoa</taxon>
        <taxon>Ecdysozoa</taxon>
        <taxon>Arthropoda</taxon>
        <taxon>Hexapoda</taxon>
        <taxon>Insecta</taxon>
        <taxon>Pterygota</taxon>
        <taxon>Neoptera</taxon>
        <taxon>Endopterygota</taxon>
        <taxon>Hymenoptera</taxon>
        <taxon>Apocrita</taxon>
        <taxon>Aculeata</taxon>
        <taxon>Apoidea</taxon>
        <taxon>Sphecidae</taxon>
        <taxon>Sphecinae</taxon>
        <taxon>Sphecina</taxon>
        <taxon>Sphex</taxon>
    </lineage>
</organism>
<comment type="subcellular location">
    <subcellularLocation>
        <location evidence="1">Secreted</location>
    </subcellularLocation>
</comment>
<comment type="tissue specificity">
    <text evidence="4">Expressed by the venom gland.</text>
</comment>
<comment type="mass spectrometry" mass="1377.5" method="MALDI" evidence="1">
    <text>Monoisotopic mass.</text>
</comment>
<comment type="similarity">
    <text evidence="3">Belongs to the SA81-like family.</text>
</comment>
<dbReference type="GO" id="GO:0005576">
    <property type="term" value="C:extracellular region"/>
    <property type="evidence" value="ECO:0007669"/>
    <property type="project" value="UniProtKB-SubCell"/>
</dbReference>
<name>VP10_SPHAA</name>
<feature type="peptide" id="PRO_0000453646" description="Venom peptide Sa10" evidence="1">
    <location>
        <begin position="1"/>
        <end position="12"/>
    </location>
</feature>
<sequence length="12" mass="1378">EDDLEDFNPTIA</sequence>
<evidence type="ECO:0000269" key="1">
    <source>
    </source>
</evidence>
<evidence type="ECO:0000303" key="2">
    <source>
    </source>
</evidence>
<evidence type="ECO:0000305" key="3"/>
<evidence type="ECO:0000305" key="4">
    <source>
    </source>
</evidence>
<keyword id="KW-0903">Direct protein sequencing</keyword>
<keyword id="KW-0964">Secreted</keyword>
<protein>
    <recommendedName>
        <fullName evidence="2">Venom peptide Sa10</fullName>
    </recommendedName>
</protein>
<accession>P0DUU7</accession>
<reference key="1">
    <citation type="journal article" date="2021" name="Peptides">
        <title>Isolation and characterization of FMRFamide-like peptides in the venoms of solitary sphecid wasps.</title>
        <authorList>
            <person name="Nihei K.I."/>
            <person name="Peigneur S."/>
            <person name="Tytgat J."/>
            <person name="Lange A.B."/>
            <person name="Konno K."/>
        </authorList>
    </citation>
    <scope>PROTEIN SEQUENCE</scope>
    <scope>SUBCELLULAR LOCATION</scope>
    <scope>MASS SPECTROMETRY</scope>
    <source>
        <tissue>Venom</tissue>
    </source>
</reference>